<proteinExistence type="inferred from homology"/>
<dbReference type="EC" id="6.3.4.21" evidence="1"/>
<dbReference type="EMBL" id="CP000826">
    <property type="protein sequence ID" value="ABV40836.1"/>
    <property type="molecule type" value="Genomic_DNA"/>
</dbReference>
<dbReference type="SMR" id="A8GCJ6"/>
<dbReference type="STRING" id="399741.Spro_1732"/>
<dbReference type="KEGG" id="spe:Spro_1732"/>
<dbReference type="eggNOG" id="COG1488">
    <property type="taxonomic scope" value="Bacteria"/>
</dbReference>
<dbReference type="HOGENOM" id="CLU_030991_1_0_6"/>
<dbReference type="OrthoDB" id="9771406at2"/>
<dbReference type="UniPathway" id="UPA00253">
    <property type="reaction ID" value="UER00457"/>
</dbReference>
<dbReference type="GO" id="GO:0005829">
    <property type="term" value="C:cytosol"/>
    <property type="evidence" value="ECO:0007669"/>
    <property type="project" value="TreeGrafter"/>
</dbReference>
<dbReference type="GO" id="GO:0004516">
    <property type="term" value="F:nicotinate phosphoribosyltransferase activity"/>
    <property type="evidence" value="ECO:0007669"/>
    <property type="project" value="UniProtKB-UniRule"/>
</dbReference>
<dbReference type="GO" id="GO:0034355">
    <property type="term" value="P:NAD biosynthetic process via the salvage pathway"/>
    <property type="evidence" value="ECO:0007669"/>
    <property type="project" value="TreeGrafter"/>
</dbReference>
<dbReference type="CDD" id="cd01401">
    <property type="entry name" value="PncB_like"/>
    <property type="match status" value="1"/>
</dbReference>
<dbReference type="FunFam" id="3.20.140.10:FF:000001">
    <property type="entry name" value="Nicotinate phosphoribosyltransferase"/>
    <property type="match status" value="1"/>
</dbReference>
<dbReference type="Gene3D" id="3.20.140.10">
    <property type="entry name" value="nicotinate phosphoribosyltransferase"/>
    <property type="match status" value="1"/>
</dbReference>
<dbReference type="HAMAP" id="MF_00570">
    <property type="entry name" value="NAPRTase"/>
    <property type="match status" value="1"/>
</dbReference>
<dbReference type="InterPro" id="IPR041525">
    <property type="entry name" value="N/Namide_PRibTrfase"/>
</dbReference>
<dbReference type="InterPro" id="IPR040727">
    <property type="entry name" value="NAPRTase_N"/>
</dbReference>
<dbReference type="InterPro" id="IPR006406">
    <property type="entry name" value="Nic_PRibTrfase"/>
</dbReference>
<dbReference type="InterPro" id="IPR007229">
    <property type="entry name" value="Nic_PRibTrfase-Fam"/>
</dbReference>
<dbReference type="InterPro" id="IPR036068">
    <property type="entry name" value="Nicotinate_pribotase-like_C"/>
</dbReference>
<dbReference type="NCBIfam" id="TIGR01514">
    <property type="entry name" value="NAPRTase"/>
    <property type="match status" value="1"/>
</dbReference>
<dbReference type="NCBIfam" id="NF003704">
    <property type="entry name" value="PRK05321.1"/>
    <property type="match status" value="1"/>
</dbReference>
<dbReference type="PANTHER" id="PTHR11098">
    <property type="entry name" value="NICOTINATE PHOSPHORIBOSYLTRANSFERASE"/>
    <property type="match status" value="1"/>
</dbReference>
<dbReference type="PANTHER" id="PTHR11098:SF1">
    <property type="entry name" value="NICOTINATE PHOSPHORIBOSYLTRANSFERASE"/>
    <property type="match status" value="1"/>
</dbReference>
<dbReference type="Pfam" id="PF04095">
    <property type="entry name" value="NAPRTase"/>
    <property type="match status" value="1"/>
</dbReference>
<dbReference type="Pfam" id="PF17767">
    <property type="entry name" value="NAPRTase_N"/>
    <property type="match status" value="1"/>
</dbReference>
<dbReference type="PIRSF" id="PIRSF000484">
    <property type="entry name" value="NAPRT"/>
    <property type="match status" value="1"/>
</dbReference>
<dbReference type="SUPFAM" id="SSF51690">
    <property type="entry name" value="Nicotinate/Quinolinate PRTase C-terminal domain-like"/>
    <property type="match status" value="1"/>
</dbReference>
<dbReference type="SUPFAM" id="SSF54675">
    <property type="entry name" value="Nicotinate/Quinolinate PRTase N-terminal domain-like"/>
    <property type="match status" value="1"/>
</dbReference>
<protein>
    <recommendedName>
        <fullName evidence="1">Nicotinate phosphoribosyltransferase</fullName>
        <shortName evidence="1">NAPRTase</shortName>
        <ecNumber evidence="1">6.3.4.21</ecNumber>
    </recommendedName>
</protein>
<organism>
    <name type="scientific">Serratia proteamaculans (strain 568)</name>
    <dbReference type="NCBI Taxonomy" id="399741"/>
    <lineage>
        <taxon>Bacteria</taxon>
        <taxon>Pseudomonadati</taxon>
        <taxon>Pseudomonadota</taxon>
        <taxon>Gammaproteobacteria</taxon>
        <taxon>Enterobacterales</taxon>
        <taxon>Yersiniaceae</taxon>
        <taxon>Serratia</taxon>
    </lineage>
</organism>
<sequence length="401" mass="45452">MTQYASPILTSLLDTDAYKLHMQQAVFHRYPAISVAAEFRCRGDELLGEYADEIGAQIALMSQLALTDAEFDYLSGLPFFREDYLNWLRDFRYDPQQVQIENHAGKLHIRIAGPWREVIMWEVPLLAVISEVVHRHRSPDVTPEMAVAHLRNKLAQFKAMSSDVDISRFKLMDFGTRRRFSQAVQQAIVGTLKNEFPYLVGTSNYDLAHQLDLAPVGTQAHEWFQAHQQISPVLANSQRAALQAWLDEYPDQLGIALTDCITMDAFLRDFGPQFAQRYQGLRHDSGDPFEWGEKAIAHFQKLGIDPMSKTLVFSDNLDLDKALALYRHFYQRVNLVFGIGTRLTCDIPGVKPLNIVIKLVECKGKPVAKLSDSPGKTICQDQAFVKALRKAFDLPLVKKAS</sequence>
<name>PNCB_SERP5</name>
<reference key="1">
    <citation type="submission" date="2007-09" db="EMBL/GenBank/DDBJ databases">
        <title>Complete sequence of chromosome of Serratia proteamaculans 568.</title>
        <authorList>
            <consortium name="US DOE Joint Genome Institute"/>
            <person name="Copeland A."/>
            <person name="Lucas S."/>
            <person name="Lapidus A."/>
            <person name="Barry K."/>
            <person name="Glavina del Rio T."/>
            <person name="Dalin E."/>
            <person name="Tice H."/>
            <person name="Pitluck S."/>
            <person name="Chain P."/>
            <person name="Malfatti S."/>
            <person name="Shin M."/>
            <person name="Vergez L."/>
            <person name="Schmutz J."/>
            <person name="Larimer F."/>
            <person name="Land M."/>
            <person name="Hauser L."/>
            <person name="Kyrpides N."/>
            <person name="Kim E."/>
            <person name="Taghavi S."/>
            <person name="Newman L."/>
            <person name="Vangronsveld J."/>
            <person name="van der Lelie D."/>
            <person name="Richardson P."/>
        </authorList>
    </citation>
    <scope>NUCLEOTIDE SEQUENCE [LARGE SCALE GENOMIC DNA]</scope>
    <source>
        <strain>568</strain>
    </source>
</reference>
<gene>
    <name evidence="1" type="primary">pncB</name>
    <name type="ordered locus">Spro_1732</name>
</gene>
<comment type="function">
    <text evidence="1">Catalyzes the synthesis of beta-nicotinate D-ribonucleotide from nicotinate and 5-phospho-D-ribose 1-phosphate at the expense of ATP.</text>
</comment>
<comment type="catalytic activity">
    <reaction evidence="1">
        <text>nicotinate + 5-phospho-alpha-D-ribose 1-diphosphate + ATP + H2O = nicotinate beta-D-ribonucleotide + ADP + phosphate + diphosphate</text>
        <dbReference type="Rhea" id="RHEA:36163"/>
        <dbReference type="ChEBI" id="CHEBI:15377"/>
        <dbReference type="ChEBI" id="CHEBI:30616"/>
        <dbReference type="ChEBI" id="CHEBI:32544"/>
        <dbReference type="ChEBI" id="CHEBI:33019"/>
        <dbReference type="ChEBI" id="CHEBI:43474"/>
        <dbReference type="ChEBI" id="CHEBI:57502"/>
        <dbReference type="ChEBI" id="CHEBI:58017"/>
        <dbReference type="ChEBI" id="CHEBI:456216"/>
        <dbReference type="EC" id="6.3.4.21"/>
    </reaction>
</comment>
<comment type="pathway">
    <text evidence="1">Cofactor biosynthesis; NAD(+) biosynthesis; nicotinate D-ribonucleotide from nicotinate: step 1/1.</text>
</comment>
<comment type="PTM">
    <text evidence="1">Transiently phosphorylated on a His residue during the reaction cycle. Phosphorylation strongly increases the affinity for substrates and increases the rate of nicotinate D-ribonucleotide production. Dephosphorylation regenerates the low-affinity form of the enzyme, leading to product release.</text>
</comment>
<comment type="similarity">
    <text evidence="1">Belongs to the NAPRTase family.</text>
</comment>
<feature type="chain" id="PRO_1000061169" description="Nicotinate phosphoribosyltransferase">
    <location>
        <begin position="1"/>
        <end position="401"/>
    </location>
</feature>
<feature type="modified residue" description="Phosphohistidine; by autocatalysis" evidence="1">
    <location>
        <position position="221"/>
    </location>
</feature>
<accession>A8GCJ6</accession>
<keyword id="KW-0436">Ligase</keyword>
<keyword id="KW-0597">Phosphoprotein</keyword>
<keyword id="KW-0662">Pyridine nucleotide biosynthesis</keyword>
<evidence type="ECO:0000255" key="1">
    <source>
        <dbReference type="HAMAP-Rule" id="MF_00570"/>
    </source>
</evidence>